<name>SUCB_ARATH</name>
<proteinExistence type="evidence at protein level"/>
<gene>
    <name type="ordered locus">At2g20420</name>
    <name type="ORF">F11A3.3</name>
</gene>
<accession>O82662</accession>
<evidence type="ECO:0000255" key="1">
    <source>
        <dbReference type="HAMAP-Rule" id="MF_03219"/>
    </source>
</evidence>
<evidence type="ECO:0000269" key="2">
    <source>
    </source>
</evidence>
<evidence type="ECO:0000269" key="3">
    <source>
    </source>
</evidence>
<feature type="transit peptide" description="Mitochondrion" evidence="2">
    <location>
        <begin position="1"/>
        <end position="26"/>
    </location>
</feature>
<feature type="chain" id="PRO_0000033362" description="Succinate--CoA ligase [ADP-forming] subunit beta, mitochondrial">
    <location>
        <begin position="27"/>
        <end position="421"/>
    </location>
</feature>
<feature type="domain" description="ATP-grasp" evidence="1">
    <location>
        <begin position="35"/>
        <end position="278"/>
    </location>
</feature>
<feature type="binding site" evidence="1">
    <location>
        <position position="74"/>
    </location>
    <ligand>
        <name>ATP</name>
        <dbReference type="ChEBI" id="CHEBI:30616"/>
    </ligand>
</feature>
<feature type="binding site" evidence="1">
    <location>
        <begin position="81"/>
        <end position="83"/>
    </location>
    <ligand>
        <name>ATP</name>
        <dbReference type="ChEBI" id="CHEBI:30616"/>
    </ligand>
</feature>
<feature type="binding site" evidence="1">
    <location>
        <position position="141"/>
    </location>
    <ligand>
        <name>ATP</name>
        <dbReference type="ChEBI" id="CHEBI:30616"/>
    </ligand>
</feature>
<feature type="binding site" evidence="1">
    <location>
        <position position="233"/>
    </location>
    <ligand>
        <name>Mg(2+)</name>
        <dbReference type="ChEBI" id="CHEBI:18420"/>
    </ligand>
</feature>
<feature type="binding site" evidence="1">
    <location>
        <position position="247"/>
    </location>
    <ligand>
        <name>Mg(2+)</name>
        <dbReference type="ChEBI" id="CHEBI:18420"/>
    </ligand>
</feature>
<feature type="binding site" evidence="1">
    <location>
        <position position="298"/>
    </location>
    <ligand>
        <name>substrate</name>
        <note>ligand shared with subunit alpha</note>
    </ligand>
</feature>
<feature type="binding site" evidence="1">
    <location>
        <begin position="355"/>
        <end position="357"/>
    </location>
    <ligand>
        <name>substrate</name>
        <note>ligand shared with subunit alpha</note>
    </ligand>
</feature>
<dbReference type="EC" id="6.2.1.5" evidence="1"/>
<dbReference type="EMBL" id="AJ001808">
    <property type="protein sequence ID" value="CAA05024.1"/>
    <property type="molecule type" value="mRNA"/>
</dbReference>
<dbReference type="EMBL" id="AC006569">
    <property type="protein sequence ID" value="AAM15283.1"/>
    <property type="molecule type" value="Genomic_DNA"/>
</dbReference>
<dbReference type="EMBL" id="CP002685">
    <property type="protein sequence ID" value="AEC07005.1"/>
    <property type="molecule type" value="Genomic_DNA"/>
</dbReference>
<dbReference type="EMBL" id="AY099707">
    <property type="protein sequence ID" value="AAM20558.1"/>
    <property type="molecule type" value="mRNA"/>
</dbReference>
<dbReference type="EMBL" id="AY128889">
    <property type="protein sequence ID" value="AAM91289.1"/>
    <property type="molecule type" value="mRNA"/>
</dbReference>
<dbReference type="PIR" id="T51809">
    <property type="entry name" value="T51809"/>
</dbReference>
<dbReference type="RefSeq" id="NP_179632.1">
    <property type="nucleotide sequence ID" value="NM_127601.4"/>
</dbReference>
<dbReference type="SMR" id="O82662"/>
<dbReference type="BioGRID" id="1914">
    <property type="interactions" value="21"/>
</dbReference>
<dbReference type="FunCoup" id="O82662">
    <property type="interactions" value="4113"/>
</dbReference>
<dbReference type="STRING" id="3702.O82662"/>
<dbReference type="MetOSite" id="O82662"/>
<dbReference type="PaxDb" id="3702-AT2G20420.1"/>
<dbReference type="ProteomicsDB" id="246381"/>
<dbReference type="EnsemblPlants" id="AT2G20420.1">
    <property type="protein sequence ID" value="AT2G20420.1"/>
    <property type="gene ID" value="AT2G20420"/>
</dbReference>
<dbReference type="GeneID" id="816561"/>
<dbReference type="Gramene" id="AT2G20420.1">
    <property type="protein sequence ID" value="AT2G20420.1"/>
    <property type="gene ID" value="AT2G20420"/>
</dbReference>
<dbReference type="KEGG" id="ath:AT2G20420"/>
<dbReference type="Araport" id="AT2G20420"/>
<dbReference type="TAIR" id="AT2G20420"/>
<dbReference type="eggNOG" id="KOG2799">
    <property type="taxonomic scope" value="Eukaryota"/>
</dbReference>
<dbReference type="HOGENOM" id="CLU_037430_0_0_1"/>
<dbReference type="InParanoid" id="O82662"/>
<dbReference type="OMA" id="ITACDEV"/>
<dbReference type="OrthoDB" id="1041306at2759"/>
<dbReference type="PhylomeDB" id="O82662"/>
<dbReference type="BioCyc" id="ARA:AT2G20420-MONOMER"/>
<dbReference type="UniPathway" id="UPA00223">
    <property type="reaction ID" value="UER00999"/>
</dbReference>
<dbReference type="CD-CODE" id="4299E36E">
    <property type="entry name" value="Nucleolus"/>
</dbReference>
<dbReference type="PRO" id="PR:O82662"/>
<dbReference type="Proteomes" id="UP000006548">
    <property type="component" value="Chromosome 2"/>
</dbReference>
<dbReference type="ExpressionAtlas" id="O82662">
    <property type="expression patterns" value="baseline and differential"/>
</dbReference>
<dbReference type="GO" id="GO:0005739">
    <property type="term" value="C:mitochondrion"/>
    <property type="evidence" value="ECO:0000314"/>
    <property type="project" value="TAIR"/>
</dbReference>
<dbReference type="GO" id="GO:0005524">
    <property type="term" value="F:ATP binding"/>
    <property type="evidence" value="ECO:0007005"/>
    <property type="project" value="TAIR"/>
</dbReference>
<dbReference type="GO" id="GO:0005507">
    <property type="term" value="F:copper ion binding"/>
    <property type="evidence" value="ECO:0007005"/>
    <property type="project" value="TAIR"/>
</dbReference>
<dbReference type="GO" id="GO:0000287">
    <property type="term" value="F:magnesium ion binding"/>
    <property type="evidence" value="ECO:0007669"/>
    <property type="project" value="UniProtKB-UniRule"/>
</dbReference>
<dbReference type="GO" id="GO:0004775">
    <property type="term" value="F:succinate-CoA ligase (ADP-forming) activity"/>
    <property type="evidence" value="ECO:0007669"/>
    <property type="project" value="UniProtKB-UniRule"/>
</dbReference>
<dbReference type="GO" id="GO:0006099">
    <property type="term" value="P:tricarboxylic acid cycle"/>
    <property type="evidence" value="ECO:0007669"/>
    <property type="project" value="UniProtKB-UniRule"/>
</dbReference>
<dbReference type="FunFam" id="3.30.470.20:FF:000002">
    <property type="entry name" value="Succinate--CoA ligase [ADP-forming] subunit beta"/>
    <property type="match status" value="1"/>
</dbReference>
<dbReference type="FunFam" id="3.40.50.261:FF:000001">
    <property type="entry name" value="Succinate--CoA ligase [ADP-forming] subunit beta"/>
    <property type="match status" value="1"/>
</dbReference>
<dbReference type="FunFam" id="3.30.1490.20:FF:000019">
    <property type="entry name" value="Succinate--CoA ligase [ADP-forming] subunit beta, mitochondrial"/>
    <property type="match status" value="1"/>
</dbReference>
<dbReference type="Gene3D" id="3.30.1490.20">
    <property type="entry name" value="ATP-grasp fold, A domain"/>
    <property type="match status" value="1"/>
</dbReference>
<dbReference type="Gene3D" id="3.30.470.20">
    <property type="entry name" value="ATP-grasp fold, B domain"/>
    <property type="match status" value="1"/>
</dbReference>
<dbReference type="Gene3D" id="3.40.50.261">
    <property type="entry name" value="Succinyl-CoA synthetase domains"/>
    <property type="match status" value="1"/>
</dbReference>
<dbReference type="HAMAP" id="MF_00558">
    <property type="entry name" value="Succ_CoA_beta"/>
    <property type="match status" value="1"/>
</dbReference>
<dbReference type="InterPro" id="IPR011761">
    <property type="entry name" value="ATP-grasp"/>
</dbReference>
<dbReference type="InterPro" id="IPR013650">
    <property type="entry name" value="ATP-grasp_succ-CoA_synth-type"/>
</dbReference>
<dbReference type="InterPro" id="IPR013815">
    <property type="entry name" value="ATP_grasp_subdomain_1"/>
</dbReference>
<dbReference type="InterPro" id="IPR017866">
    <property type="entry name" value="Succ-CoA_synthase_bsu_CS"/>
</dbReference>
<dbReference type="InterPro" id="IPR005811">
    <property type="entry name" value="SUCC_ACL_C"/>
</dbReference>
<dbReference type="InterPro" id="IPR005809">
    <property type="entry name" value="Succ_CoA_ligase-like_bsu"/>
</dbReference>
<dbReference type="InterPro" id="IPR016102">
    <property type="entry name" value="Succinyl-CoA_synth-like"/>
</dbReference>
<dbReference type="NCBIfam" id="NF001913">
    <property type="entry name" value="PRK00696.1"/>
    <property type="match status" value="1"/>
</dbReference>
<dbReference type="NCBIfam" id="TIGR01016">
    <property type="entry name" value="sucCoAbeta"/>
    <property type="match status" value="1"/>
</dbReference>
<dbReference type="PANTHER" id="PTHR11815:SF10">
    <property type="entry name" value="SUCCINATE--COA LIGASE [GDP-FORMING] SUBUNIT BETA, MITOCHONDRIAL"/>
    <property type="match status" value="1"/>
</dbReference>
<dbReference type="PANTHER" id="PTHR11815">
    <property type="entry name" value="SUCCINYL-COA SYNTHETASE BETA CHAIN"/>
    <property type="match status" value="1"/>
</dbReference>
<dbReference type="Pfam" id="PF08442">
    <property type="entry name" value="ATP-grasp_2"/>
    <property type="match status" value="1"/>
</dbReference>
<dbReference type="Pfam" id="PF00549">
    <property type="entry name" value="Ligase_CoA"/>
    <property type="match status" value="1"/>
</dbReference>
<dbReference type="PIRSF" id="PIRSF001554">
    <property type="entry name" value="SucCS_beta"/>
    <property type="match status" value="1"/>
</dbReference>
<dbReference type="SUPFAM" id="SSF56059">
    <property type="entry name" value="Glutathione synthetase ATP-binding domain-like"/>
    <property type="match status" value="1"/>
</dbReference>
<dbReference type="SUPFAM" id="SSF52210">
    <property type="entry name" value="Succinyl-CoA synthetase domains"/>
    <property type="match status" value="1"/>
</dbReference>
<dbReference type="PROSITE" id="PS50975">
    <property type="entry name" value="ATP_GRASP"/>
    <property type="match status" value="1"/>
</dbReference>
<dbReference type="PROSITE" id="PS01217">
    <property type="entry name" value="SUCCINYL_COA_LIG_3"/>
    <property type="match status" value="1"/>
</dbReference>
<sequence length="421" mass="45346">MRGLVNKLVSRSLSISGKWQNQQLRRLNIHEYQGAELMGKYGVNVPKGVAASSLEEVKKAIQDVFPNESELVVKSQILAGGRGLGTFKSGLKGGVHIVKRDEAEEIAGKMLGQVLVTKQTGPQGKVVSKVYLCEKLSLVNEMYFSIILDRKSAGPLIIACKKGGTSIEDLAEKFPDMIIKVPIDVFAGITDEDAAKVVDGLAPKAADRKDSIEQVKKLYELFRKTDCTMLEINPLAETSTNQLVAADAKLNFDDNAAFRQKEVFAMRDPTQEDPREVAAAKVDLNYIGLDGEIGCMVNGAGLAMATMDIIKLHGGTPANFLDVGGNASEHQVVEAFKILTSDDKVKAILVNIFGGIMKCDVIASGIVNAAKEVALKVPVVVRLEGTNVEQGKRILKESGMKLITADDLDDAAEKAVKALAH</sequence>
<reference key="1">
    <citation type="submission" date="1997-09" db="EMBL/GenBank/DDBJ databases">
        <title>Cloning and characterization of succinyl-CoA-ligase from Arabidopsis thaliana.</title>
        <authorList>
            <person name="Machuy N."/>
            <person name="Klein M."/>
            <person name="Mueller-Roeber B."/>
        </authorList>
    </citation>
    <scope>NUCLEOTIDE SEQUENCE [MRNA]</scope>
    <source>
        <strain>cv. C24</strain>
    </source>
</reference>
<reference key="2">
    <citation type="journal article" date="1999" name="Nature">
        <title>Sequence and analysis of chromosome 2 of the plant Arabidopsis thaliana.</title>
        <authorList>
            <person name="Lin X."/>
            <person name="Kaul S."/>
            <person name="Rounsley S.D."/>
            <person name="Shea T.P."/>
            <person name="Benito M.-I."/>
            <person name="Town C.D."/>
            <person name="Fujii C.Y."/>
            <person name="Mason T.M."/>
            <person name="Bowman C.L."/>
            <person name="Barnstead M.E."/>
            <person name="Feldblyum T.V."/>
            <person name="Buell C.R."/>
            <person name="Ketchum K.A."/>
            <person name="Lee J.J."/>
            <person name="Ronning C.M."/>
            <person name="Koo H.L."/>
            <person name="Moffat K.S."/>
            <person name="Cronin L.A."/>
            <person name="Shen M."/>
            <person name="Pai G."/>
            <person name="Van Aken S."/>
            <person name="Umayam L."/>
            <person name="Tallon L.J."/>
            <person name="Gill J.E."/>
            <person name="Adams M.D."/>
            <person name="Carrera A.J."/>
            <person name="Creasy T.H."/>
            <person name="Goodman H.M."/>
            <person name="Somerville C.R."/>
            <person name="Copenhaver G.P."/>
            <person name="Preuss D."/>
            <person name="Nierman W.C."/>
            <person name="White O."/>
            <person name="Eisen J.A."/>
            <person name="Salzberg S.L."/>
            <person name="Fraser C.M."/>
            <person name="Venter J.C."/>
        </authorList>
    </citation>
    <scope>NUCLEOTIDE SEQUENCE [LARGE SCALE GENOMIC DNA]</scope>
    <source>
        <strain>cv. Columbia</strain>
    </source>
</reference>
<reference key="3">
    <citation type="journal article" date="2017" name="Plant J.">
        <title>Araport11: a complete reannotation of the Arabidopsis thaliana reference genome.</title>
        <authorList>
            <person name="Cheng C.Y."/>
            <person name="Krishnakumar V."/>
            <person name="Chan A.P."/>
            <person name="Thibaud-Nissen F."/>
            <person name="Schobel S."/>
            <person name="Town C.D."/>
        </authorList>
    </citation>
    <scope>GENOME REANNOTATION</scope>
    <source>
        <strain>cv. Columbia</strain>
    </source>
</reference>
<reference key="4">
    <citation type="journal article" date="2003" name="Science">
        <title>Empirical analysis of transcriptional activity in the Arabidopsis genome.</title>
        <authorList>
            <person name="Yamada K."/>
            <person name="Lim J."/>
            <person name="Dale J.M."/>
            <person name="Chen H."/>
            <person name="Shinn P."/>
            <person name="Palm C.J."/>
            <person name="Southwick A.M."/>
            <person name="Wu H.C."/>
            <person name="Kim C.J."/>
            <person name="Nguyen M."/>
            <person name="Pham P.K."/>
            <person name="Cheuk R.F."/>
            <person name="Karlin-Newmann G."/>
            <person name="Liu S.X."/>
            <person name="Lam B."/>
            <person name="Sakano H."/>
            <person name="Wu T."/>
            <person name="Yu G."/>
            <person name="Miranda M."/>
            <person name="Quach H.L."/>
            <person name="Tripp M."/>
            <person name="Chang C.H."/>
            <person name="Lee J.M."/>
            <person name="Toriumi M.J."/>
            <person name="Chan M.M."/>
            <person name="Tang C.C."/>
            <person name="Onodera C.S."/>
            <person name="Deng J.M."/>
            <person name="Akiyama K."/>
            <person name="Ansari Y."/>
            <person name="Arakawa T."/>
            <person name="Banh J."/>
            <person name="Banno F."/>
            <person name="Bowser L."/>
            <person name="Brooks S.Y."/>
            <person name="Carninci P."/>
            <person name="Chao Q."/>
            <person name="Choy N."/>
            <person name="Enju A."/>
            <person name="Goldsmith A.D."/>
            <person name="Gurjal M."/>
            <person name="Hansen N.F."/>
            <person name="Hayashizaki Y."/>
            <person name="Johnson-Hopson C."/>
            <person name="Hsuan V.W."/>
            <person name="Iida K."/>
            <person name="Karnes M."/>
            <person name="Khan S."/>
            <person name="Koesema E."/>
            <person name="Ishida J."/>
            <person name="Jiang P.X."/>
            <person name="Jones T."/>
            <person name="Kawai J."/>
            <person name="Kamiya A."/>
            <person name="Meyers C."/>
            <person name="Nakajima M."/>
            <person name="Narusaka M."/>
            <person name="Seki M."/>
            <person name="Sakurai T."/>
            <person name="Satou M."/>
            <person name="Tamse R."/>
            <person name="Vaysberg M."/>
            <person name="Wallender E.K."/>
            <person name="Wong C."/>
            <person name="Yamamura Y."/>
            <person name="Yuan S."/>
            <person name="Shinozaki K."/>
            <person name="Davis R.W."/>
            <person name="Theologis A."/>
            <person name="Ecker J.R."/>
        </authorList>
    </citation>
    <scope>NUCLEOTIDE SEQUENCE [LARGE SCALE MRNA]</scope>
    <source>
        <strain>cv. Columbia</strain>
    </source>
</reference>
<reference key="5">
    <citation type="journal article" date="2001" name="Plant Physiol.">
        <title>Proteomic approach to identify novel mitochondrial proteins in Arabidopsis.</title>
        <authorList>
            <person name="Kruft V."/>
            <person name="Eubel H."/>
            <person name="Jaensch L."/>
            <person name="Werhahn W."/>
            <person name="Braun H.-P."/>
        </authorList>
    </citation>
    <scope>PROTEIN SEQUENCE OF 27-41</scope>
    <scope>SUBCELLULAR LOCATION</scope>
    <source>
        <tissue>Leaf</tissue>
        <tissue>Stem</tissue>
    </source>
</reference>
<reference key="6">
    <citation type="journal article" date="2004" name="Plant Cell">
        <title>Experimental analysis of the Arabidopsis mitochondrial proteome highlights signaling and regulatory components, provides assessment of targeting prediction programs, and indicates plant-specific mitochondrial proteins.</title>
        <authorList>
            <person name="Heazlewood J.L."/>
            <person name="Tonti-Filippini J.S."/>
            <person name="Gout A.M."/>
            <person name="Day D.A."/>
            <person name="Whelan J."/>
            <person name="Millar A.H."/>
        </authorList>
    </citation>
    <scope>IDENTIFICATION BY MASS SPECTROMETRY</scope>
    <scope>SUBCELLULAR LOCATION [LARGE SCALE ANALYSIS]</scope>
    <source>
        <strain>cv. Landsberg erecta</strain>
    </source>
</reference>
<reference key="7">
    <citation type="journal article" date="2007" name="Mol. Cell. Proteomics">
        <title>Multidimensional protein identification technology (MudPIT) analysis of ubiquitinated proteins in plants.</title>
        <authorList>
            <person name="Maor R."/>
            <person name="Jones A."/>
            <person name="Nuehse T.S."/>
            <person name="Studholme D.J."/>
            <person name="Peck S.C."/>
            <person name="Shirasu K."/>
        </authorList>
    </citation>
    <scope>IDENTIFICATION BY MASS SPECTROMETRY [LARGE SCALE ANALYSIS]</scope>
    <source>
        <strain>cv. Landsberg erecta</strain>
    </source>
</reference>
<comment type="function">
    <text evidence="1">Succinyl-CoA synthetase functions in the citric acid cycle (TCA), coupling the hydrolysis of succinyl-CoA to the synthesis of ATP and thus represents the only step of substrate-level phosphorylation in the TCA. The beta subunit provides nucleotide specificity of the enzyme and binds the substrate succinate, while the binding sites for coenzyme A and phosphate are found in the alpha subunit.</text>
</comment>
<comment type="catalytic activity">
    <reaction evidence="1">
        <text>succinate + ATP + CoA = succinyl-CoA + ADP + phosphate</text>
        <dbReference type="Rhea" id="RHEA:17661"/>
        <dbReference type="ChEBI" id="CHEBI:30031"/>
        <dbReference type="ChEBI" id="CHEBI:30616"/>
        <dbReference type="ChEBI" id="CHEBI:43474"/>
        <dbReference type="ChEBI" id="CHEBI:57287"/>
        <dbReference type="ChEBI" id="CHEBI:57292"/>
        <dbReference type="ChEBI" id="CHEBI:456216"/>
        <dbReference type="EC" id="6.2.1.5"/>
    </reaction>
</comment>
<comment type="cofactor">
    <cofactor evidence="1">
        <name>Mg(2+)</name>
        <dbReference type="ChEBI" id="CHEBI:18420"/>
    </cofactor>
    <text evidence="1">Binds 1 Mg(2+) ion per subunit.</text>
</comment>
<comment type="pathway">
    <text evidence="1">Carbohydrate metabolism; tricarboxylic acid cycle; succinate from succinyl-CoA (ligase route): step 1/1.</text>
</comment>
<comment type="subunit">
    <text evidence="1">Heterodimer of an alpha and a beta subunit.</text>
</comment>
<comment type="subcellular location">
    <subcellularLocation>
        <location evidence="1 2 3">Mitochondrion</location>
    </subcellularLocation>
</comment>
<comment type="similarity">
    <text evidence="1">Belongs to the succinate/malate CoA ligase beta subunit family.</text>
</comment>
<keyword id="KW-0067">ATP-binding</keyword>
<keyword id="KW-0903">Direct protein sequencing</keyword>
<keyword id="KW-0436">Ligase</keyword>
<keyword id="KW-0460">Magnesium</keyword>
<keyword id="KW-0479">Metal-binding</keyword>
<keyword id="KW-0496">Mitochondrion</keyword>
<keyword id="KW-0547">Nucleotide-binding</keyword>
<keyword id="KW-1185">Reference proteome</keyword>
<keyword id="KW-0809">Transit peptide</keyword>
<keyword id="KW-0816">Tricarboxylic acid cycle</keyword>
<protein>
    <recommendedName>
        <fullName evidence="1">Succinate--CoA ligase [ADP-forming] subunit beta, mitochondrial</fullName>
        <ecNumber evidence="1">6.2.1.5</ecNumber>
    </recommendedName>
    <alternativeName>
        <fullName evidence="1">Succinyl-CoA synthetase beta chain</fullName>
        <shortName evidence="1">SCS-beta</shortName>
    </alternativeName>
</protein>
<organism>
    <name type="scientific">Arabidopsis thaliana</name>
    <name type="common">Mouse-ear cress</name>
    <dbReference type="NCBI Taxonomy" id="3702"/>
    <lineage>
        <taxon>Eukaryota</taxon>
        <taxon>Viridiplantae</taxon>
        <taxon>Streptophyta</taxon>
        <taxon>Embryophyta</taxon>
        <taxon>Tracheophyta</taxon>
        <taxon>Spermatophyta</taxon>
        <taxon>Magnoliopsida</taxon>
        <taxon>eudicotyledons</taxon>
        <taxon>Gunneridae</taxon>
        <taxon>Pentapetalae</taxon>
        <taxon>rosids</taxon>
        <taxon>malvids</taxon>
        <taxon>Brassicales</taxon>
        <taxon>Brassicaceae</taxon>
        <taxon>Camelineae</taxon>
        <taxon>Arabidopsis</taxon>
    </lineage>
</organism>